<reference key="1">
    <citation type="journal article" date="1998" name="FEBS Lett.">
        <title>Widespread occurrence of a highly conserved RING-H2 zinc finger motif in the model plant Arabidopsis thaliana.</title>
        <authorList>
            <person name="Jensen R.B."/>
            <person name="Jensen K.L."/>
            <person name="Jespersen H.M."/>
            <person name="Skriver K."/>
        </authorList>
    </citation>
    <scope>NUCLEOTIDE SEQUENCE [MRNA]</scope>
    <source>
        <strain>cv. Columbia</strain>
    </source>
</reference>
<reference key="2">
    <citation type="journal article" date="2000" name="Nature">
        <title>Sequence and analysis of chromosome 5 of the plant Arabidopsis thaliana.</title>
        <authorList>
            <person name="Tabata S."/>
            <person name="Kaneko T."/>
            <person name="Nakamura Y."/>
            <person name="Kotani H."/>
            <person name="Kato T."/>
            <person name="Asamizu E."/>
            <person name="Miyajima N."/>
            <person name="Sasamoto S."/>
            <person name="Kimura T."/>
            <person name="Hosouchi T."/>
            <person name="Kawashima K."/>
            <person name="Kohara M."/>
            <person name="Matsumoto M."/>
            <person name="Matsuno A."/>
            <person name="Muraki A."/>
            <person name="Nakayama S."/>
            <person name="Nakazaki N."/>
            <person name="Naruo K."/>
            <person name="Okumura S."/>
            <person name="Shinpo S."/>
            <person name="Takeuchi C."/>
            <person name="Wada T."/>
            <person name="Watanabe A."/>
            <person name="Yamada M."/>
            <person name="Yasuda M."/>
            <person name="Sato S."/>
            <person name="de la Bastide M."/>
            <person name="Huang E."/>
            <person name="Spiegel L."/>
            <person name="Gnoj L."/>
            <person name="O'Shaughnessy A."/>
            <person name="Preston R."/>
            <person name="Habermann K."/>
            <person name="Murray J."/>
            <person name="Johnson D."/>
            <person name="Rohlfing T."/>
            <person name="Nelson J."/>
            <person name="Stoneking T."/>
            <person name="Pepin K."/>
            <person name="Spieth J."/>
            <person name="Sekhon M."/>
            <person name="Armstrong J."/>
            <person name="Becker M."/>
            <person name="Belter E."/>
            <person name="Cordum H."/>
            <person name="Cordes M."/>
            <person name="Courtney L."/>
            <person name="Courtney W."/>
            <person name="Dante M."/>
            <person name="Du H."/>
            <person name="Edwards J."/>
            <person name="Fryman J."/>
            <person name="Haakensen B."/>
            <person name="Lamar E."/>
            <person name="Latreille P."/>
            <person name="Leonard S."/>
            <person name="Meyer R."/>
            <person name="Mulvaney E."/>
            <person name="Ozersky P."/>
            <person name="Riley A."/>
            <person name="Strowmatt C."/>
            <person name="Wagner-McPherson C."/>
            <person name="Wollam A."/>
            <person name="Yoakum M."/>
            <person name="Bell M."/>
            <person name="Dedhia N."/>
            <person name="Parnell L."/>
            <person name="Shah R."/>
            <person name="Rodriguez M."/>
            <person name="Hoon See L."/>
            <person name="Vil D."/>
            <person name="Baker J."/>
            <person name="Kirchoff K."/>
            <person name="Toth K."/>
            <person name="King L."/>
            <person name="Bahret A."/>
            <person name="Miller B."/>
            <person name="Marra M.A."/>
            <person name="Martienssen R."/>
            <person name="McCombie W.R."/>
            <person name="Wilson R.K."/>
            <person name="Murphy G."/>
            <person name="Bancroft I."/>
            <person name="Volckaert G."/>
            <person name="Wambutt R."/>
            <person name="Duesterhoeft A."/>
            <person name="Stiekema W."/>
            <person name="Pohl T."/>
            <person name="Entian K.-D."/>
            <person name="Terryn N."/>
            <person name="Hartley N."/>
            <person name="Bent E."/>
            <person name="Johnson S."/>
            <person name="Langham S.-A."/>
            <person name="McCullagh B."/>
            <person name="Robben J."/>
            <person name="Grymonprez B."/>
            <person name="Zimmermann W."/>
            <person name="Ramsperger U."/>
            <person name="Wedler H."/>
            <person name="Balke K."/>
            <person name="Wedler E."/>
            <person name="Peters S."/>
            <person name="van Staveren M."/>
            <person name="Dirkse W."/>
            <person name="Mooijman P."/>
            <person name="Klein Lankhorst R."/>
            <person name="Weitzenegger T."/>
            <person name="Bothe G."/>
            <person name="Rose M."/>
            <person name="Hauf J."/>
            <person name="Berneiser S."/>
            <person name="Hempel S."/>
            <person name="Feldpausch M."/>
            <person name="Lamberth S."/>
            <person name="Villarroel R."/>
            <person name="Gielen J."/>
            <person name="Ardiles W."/>
            <person name="Bents O."/>
            <person name="Lemcke K."/>
            <person name="Kolesov G."/>
            <person name="Mayer K.F.X."/>
            <person name="Rudd S."/>
            <person name="Schoof H."/>
            <person name="Schueller C."/>
            <person name="Zaccaria P."/>
            <person name="Mewes H.-W."/>
            <person name="Bevan M."/>
            <person name="Fransz P.F."/>
        </authorList>
    </citation>
    <scope>NUCLEOTIDE SEQUENCE [LARGE SCALE GENOMIC DNA]</scope>
    <source>
        <strain>cv. Columbia</strain>
    </source>
</reference>
<reference key="3">
    <citation type="journal article" date="2017" name="Plant J.">
        <title>Araport11: a complete reannotation of the Arabidopsis thaliana reference genome.</title>
        <authorList>
            <person name="Cheng C.Y."/>
            <person name="Krishnakumar V."/>
            <person name="Chan A.P."/>
            <person name="Thibaud-Nissen F."/>
            <person name="Schobel S."/>
            <person name="Town C.D."/>
        </authorList>
    </citation>
    <scope>GENOME REANNOTATION</scope>
    <source>
        <strain>cv. Columbia</strain>
    </source>
</reference>
<reference key="4">
    <citation type="journal article" date="2002" name="Science">
        <title>Functional annotation of a full-length Arabidopsis cDNA collection.</title>
        <authorList>
            <person name="Seki M."/>
            <person name="Narusaka M."/>
            <person name="Kamiya A."/>
            <person name="Ishida J."/>
            <person name="Satou M."/>
            <person name="Sakurai T."/>
            <person name="Nakajima M."/>
            <person name="Enju A."/>
            <person name="Akiyama K."/>
            <person name="Oono Y."/>
            <person name="Muramatsu M."/>
            <person name="Hayashizaki Y."/>
            <person name="Kawai J."/>
            <person name="Carninci P."/>
            <person name="Itoh M."/>
            <person name="Ishii Y."/>
            <person name="Arakawa T."/>
            <person name="Shibata K."/>
            <person name="Shinagawa A."/>
            <person name="Shinozaki K."/>
        </authorList>
    </citation>
    <scope>NUCLEOTIDE SEQUENCE [LARGE SCALE MRNA] (ISOFORM 1)</scope>
    <source>
        <strain>cv. Columbia</strain>
    </source>
</reference>
<reference key="5">
    <citation type="journal article" date="2003" name="Science">
        <title>Empirical analysis of transcriptional activity in the Arabidopsis genome.</title>
        <authorList>
            <person name="Yamada K."/>
            <person name="Lim J."/>
            <person name="Dale J.M."/>
            <person name="Chen H."/>
            <person name="Shinn P."/>
            <person name="Palm C.J."/>
            <person name="Southwick A.M."/>
            <person name="Wu H.C."/>
            <person name="Kim C.J."/>
            <person name="Nguyen M."/>
            <person name="Pham P.K."/>
            <person name="Cheuk R.F."/>
            <person name="Karlin-Newmann G."/>
            <person name="Liu S.X."/>
            <person name="Lam B."/>
            <person name="Sakano H."/>
            <person name="Wu T."/>
            <person name="Yu G."/>
            <person name="Miranda M."/>
            <person name="Quach H.L."/>
            <person name="Tripp M."/>
            <person name="Chang C.H."/>
            <person name="Lee J.M."/>
            <person name="Toriumi M.J."/>
            <person name="Chan M.M."/>
            <person name="Tang C.C."/>
            <person name="Onodera C.S."/>
            <person name="Deng J.M."/>
            <person name="Akiyama K."/>
            <person name="Ansari Y."/>
            <person name="Arakawa T."/>
            <person name="Banh J."/>
            <person name="Banno F."/>
            <person name="Bowser L."/>
            <person name="Brooks S.Y."/>
            <person name="Carninci P."/>
            <person name="Chao Q."/>
            <person name="Choy N."/>
            <person name="Enju A."/>
            <person name="Goldsmith A.D."/>
            <person name="Gurjal M."/>
            <person name="Hansen N.F."/>
            <person name="Hayashizaki Y."/>
            <person name="Johnson-Hopson C."/>
            <person name="Hsuan V.W."/>
            <person name="Iida K."/>
            <person name="Karnes M."/>
            <person name="Khan S."/>
            <person name="Koesema E."/>
            <person name="Ishida J."/>
            <person name="Jiang P.X."/>
            <person name="Jones T."/>
            <person name="Kawai J."/>
            <person name="Kamiya A."/>
            <person name="Meyers C."/>
            <person name="Nakajima M."/>
            <person name="Narusaka M."/>
            <person name="Seki M."/>
            <person name="Sakurai T."/>
            <person name="Satou M."/>
            <person name="Tamse R."/>
            <person name="Vaysberg M."/>
            <person name="Wallender E.K."/>
            <person name="Wong C."/>
            <person name="Yamamura Y."/>
            <person name="Yuan S."/>
            <person name="Shinozaki K."/>
            <person name="Davis R.W."/>
            <person name="Theologis A."/>
            <person name="Ecker J.R."/>
        </authorList>
    </citation>
    <scope>NUCLEOTIDE SEQUENCE [LARGE SCALE MRNA] (ISOFORM 1)</scope>
    <source>
        <strain>cv. Columbia</strain>
    </source>
</reference>
<reference key="6">
    <citation type="journal article" date="2009" name="DNA Res.">
        <title>Analysis of multiple occurrences of alternative splicing events in Arabidopsis thaliana using novel sequenced full-length cDNAs.</title>
        <authorList>
            <person name="Iida K."/>
            <person name="Fukami-Kobayashi K."/>
            <person name="Toyoda A."/>
            <person name="Sakaki Y."/>
            <person name="Kobayashi M."/>
            <person name="Seki M."/>
            <person name="Shinozaki K."/>
        </authorList>
    </citation>
    <scope>NUCLEOTIDE SEQUENCE [LARGE SCALE MRNA] (ISOFORM 1)</scope>
    <source>
        <strain>cv. Columbia</strain>
    </source>
</reference>
<reference key="7">
    <citation type="journal article" date="2008" name="Plant Cell">
        <title>Targeted degradation of the cyclin-dependent kinase inhibitor ICK4/KRP6 by RING-type E3 ligases is essential for mitotic cell cycle progression during Arabidopsis gametogenesis.</title>
        <authorList>
            <person name="Liu J."/>
            <person name="Zhang Y."/>
            <person name="Qin G."/>
            <person name="Tsuge T."/>
            <person name="Sakaguchi N."/>
            <person name="Luo G."/>
            <person name="Sun K."/>
            <person name="Shi D."/>
            <person name="Aki S."/>
            <person name="Zheng N."/>
            <person name="Aoyama T."/>
            <person name="Oka A."/>
            <person name="Yang W."/>
            <person name="Umeda M."/>
            <person name="Xie Q."/>
            <person name="Gu H."/>
            <person name="Qu L.J."/>
        </authorList>
    </citation>
    <scope>FUNCTION</scope>
    <scope>DEVELOPMENTAL STAGE</scope>
</reference>
<name>RHF2A_ARATH</name>
<sequence>MEGAGETTTSEGHLTSAAAFVEGGIQDACDDACSICLESFCESDPSTLTSCKHEYHLQCILEWCQRSSQCPMCWQSISLKDPTSQELLEAVEQERNFRFNPTRNATIFRHPTLGDFELQHLPVGVDNAEIEERIIQHLAAAAAMGRARHGVRREGHRSRSSSQGHQQFMVFSSQPNASSPPPHPPMPSSPSQRDESDTVSNLPHNALGEGSHQSNTQPPTSSHPRQVSPSASDSNSRPLNQSSPSEQDRAGPSELQSFSESLKSRLNAVSTRYKESISKNTRNWKDRLFSRNTSMADLGSEVKREVSAGIATVSRMMERLETRENSRPSTASVSDVSENHTPETNNEHNRAAAGDEHSVNERGVKETCATGSGSS</sequence>
<accession>Q9ZT42</accession>
<accession>B9DFN0</accession>
<accession>Q3E981</accession>
<accession>Q8GXA8</accession>
<comment type="function">
    <text evidence="3">E3 ubiquitin-protein ligase involved in the positive regulation of the gametogenesis progression. Required for the degradation of KRP6, a cyclin-dependent kinase inhibitor which accumulates during meiosis and blocks the progression of subsequent mitoses during gametophytes development. Functions in association with RHF1A.</text>
</comment>
<comment type="catalytic activity">
    <reaction>
        <text>S-ubiquitinyl-[E2 ubiquitin-conjugating enzyme]-L-cysteine + [acceptor protein]-L-lysine = [E2 ubiquitin-conjugating enzyme]-L-cysteine + N(6)-ubiquitinyl-[acceptor protein]-L-lysine.</text>
        <dbReference type="EC" id="2.3.2.27"/>
    </reaction>
</comment>
<comment type="pathway">
    <text>Protein modification; protein ubiquitination.</text>
</comment>
<comment type="alternative products">
    <event type="alternative splicing"/>
    <isoform>
        <id>Q9ZT42-1</id>
        <name>1</name>
        <sequence type="displayed"/>
    </isoform>
    <isoform>
        <id>Q9ZT42-2</id>
        <name>2</name>
        <sequence type="described" ref="VSP_039550"/>
    </isoform>
</comment>
<comment type="developmental stage">
    <text evidence="3">Expressed throughout flower development.</text>
</comment>
<comment type="sequence caution" evidence="5">
    <conflict type="frameshift">
        <sequence resource="EMBL-CDS" id="BAC42950"/>
    </conflict>
</comment>
<keyword id="KW-0025">Alternative splicing</keyword>
<keyword id="KW-0479">Metal-binding</keyword>
<keyword id="KW-1185">Reference proteome</keyword>
<keyword id="KW-0808">Transferase</keyword>
<keyword id="KW-0833">Ubl conjugation pathway</keyword>
<keyword id="KW-0862">Zinc</keyword>
<keyword id="KW-0863">Zinc-finger</keyword>
<protein>
    <recommendedName>
        <fullName evidence="5">E3 ubiquitin-protein ligase RHF2A</fullName>
        <ecNumber>2.3.2.27</ecNumber>
    </recommendedName>
    <alternativeName>
        <fullName evidence="4">RING-H2 finger F2a</fullName>
    </alternativeName>
    <alternativeName>
        <fullName evidence="5">RING-H2 zinc finger protein RHF2a</fullName>
    </alternativeName>
    <alternativeName>
        <fullName evidence="5">RING-type E3 ubiquitin transferase RHF2A</fullName>
    </alternativeName>
</protein>
<feature type="chain" id="PRO_0000395846" description="E3 ubiquitin-protein ligase RHF2A">
    <location>
        <begin position="1"/>
        <end position="375"/>
    </location>
</feature>
<feature type="zinc finger region" description="RING-type; atypical" evidence="1">
    <location>
        <begin position="33"/>
        <end position="74"/>
    </location>
</feature>
<feature type="region of interest" description="Disordered" evidence="2">
    <location>
        <begin position="146"/>
        <end position="165"/>
    </location>
</feature>
<feature type="region of interest" description="Disordered" evidence="2">
    <location>
        <begin position="172"/>
        <end position="262"/>
    </location>
</feature>
<feature type="region of interest" description="Disordered" evidence="2">
    <location>
        <begin position="318"/>
        <end position="375"/>
    </location>
</feature>
<feature type="compositionally biased region" description="Basic residues" evidence="2">
    <location>
        <begin position="146"/>
        <end position="159"/>
    </location>
</feature>
<feature type="compositionally biased region" description="Pro residues" evidence="2">
    <location>
        <begin position="178"/>
        <end position="188"/>
    </location>
</feature>
<feature type="compositionally biased region" description="Polar residues" evidence="2">
    <location>
        <begin position="211"/>
        <end position="245"/>
    </location>
</feature>
<feature type="compositionally biased region" description="Polar residues" evidence="2">
    <location>
        <begin position="327"/>
        <end position="336"/>
    </location>
</feature>
<feature type="compositionally biased region" description="Basic and acidic residues" evidence="2">
    <location>
        <begin position="337"/>
        <end position="365"/>
    </location>
</feature>
<feature type="splice variant" id="VSP_039550" description="In isoform 2." evidence="5">
    <original>GAGE</original>
    <variation>VRVS</variation>
    <location>
        <begin position="3"/>
        <end position="6"/>
    </location>
</feature>
<feature type="sequence conflict" description="In Ref. 4; BAC42950." evidence="5" ref="4">
    <original>R</original>
    <variation>K</variation>
    <location>
        <position position="66"/>
    </location>
</feature>
<feature type="sequence conflict" description="In Ref. 6; BAH19547." evidence="5" ref="6">
    <original>E</original>
    <variation>K</variation>
    <location>
        <position position="343"/>
    </location>
</feature>
<gene>
    <name evidence="4" type="primary">RHF2A</name>
    <name type="ordered locus">At5g22000</name>
    <name type="ORF">T6G21.110</name>
</gene>
<evidence type="ECO:0000255" key="1">
    <source>
        <dbReference type="PROSITE-ProRule" id="PRU00175"/>
    </source>
</evidence>
<evidence type="ECO:0000256" key="2">
    <source>
        <dbReference type="SAM" id="MobiDB-lite"/>
    </source>
</evidence>
<evidence type="ECO:0000269" key="3">
    <source>
    </source>
</evidence>
<evidence type="ECO:0000303" key="4">
    <source>
    </source>
</evidence>
<evidence type="ECO:0000305" key="5"/>
<proteinExistence type="evidence at transcript level"/>
<organism>
    <name type="scientific">Arabidopsis thaliana</name>
    <name type="common">Mouse-ear cress</name>
    <dbReference type="NCBI Taxonomy" id="3702"/>
    <lineage>
        <taxon>Eukaryota</taxon>
        <taxon>Viridiplantae</taxon>
        <taxon>Streptophyta</taxon>
        <taxon>Embryophyta</taxon>
        <taxon>Tracheophyta</taxon>
        <taxon>Spermatophyta</taxon>
        <taxon>Magnoliopsida</taxon>
        <taxon>eudicotyledons</taxon>
        <taxon>Gunneridae</taxon>
        <taxon>Pentapetalae</taxon>
        <taxon>rosids</taxon>
        <taxon>malvids</taxon>
        <taxon>Brassicales</taxon>
        <taxon>Brassicaceae</taxon>
        <taxon>Camelineae</taxon>
        <taxon>Arabidopsis</taxon>
    </lineage>
</organism>
<dbReference type="EC" id="2.3.2.27"/>
<dbReference type="EMBL" id="AF079182">
    <property type="protein sequence ID" value="AAC69856.1"/>
    <property type="molecule type" value="mRNA"/>
</dbReference>
<dbReference type="EMBL" id="AL589883">
    <property type="protein sequence ID" value="CAC34493.1"/>
    <property type="molecule type" value="Genomic_DNA"/>
</dbReference>
<dbReference type="EMBL" id="CP002688">
    <property type="protein sequence ID" value="AED92965.1"/>
    <property type="molecule type" value="Genomic_DNA"/>
</dbReference>
<dbReference type="EMBL" id="CP002688">
    <property type="protein sequence ID" value="AED92966.1"/>
    <property type="molecule type" value="Genomic_DNA"/>
</dbReference>
<dbReference type="EMBL" id="CP002688">
    <property type="protein sequence ID" value="AED92967.1"/>
    <property type="molecule type" value="Genomic_DNA"/>
</dbReference>
<dbReference type="EMBL" id="AK118336">
    <property type="protein sequence ID" value="BAC42950.1"/>
    <property type="status" value="ALT_FRAME"/>
    <property type="molecule type" value="mRNA"/>
</dbReference>
<dbReference type="EMBL" id="AF324994">
    <property type="protein sequence ID" value="AAG40346.1"/>
    <property type="molecule type" value="mRNA"/>
</dbReference>
<dbReference type="EMBL" id="BT002347">
    <property type="protein sequence ID" value="AAN86180.1"/>
    <property type="molecule type" value="mRNA"/>
</dbReference>
<dbReference type="EMBL" id="AK316835">
    <property type="protein sequence ID" value="BAH19547.1"/>
    <property type="molecule type" value="mRNA"/>
</dbReference>
<dbReference type="PIR" id="T51854">
    <property type="entry name" value="T51854"/>
</dbReference>
<dbReference type="RefSeq" id="NP_568410.1">
    <molecule id="Q9ZT42-1"/>
    <property type="nucleotide sequence ID" value="NM_122125.3"/>
</dbReference>
<dbReference type="RefSeq" id="NP_851050.1">
    <molecule id="Q9ZT42-1"/>
    <property type="nucleotide sequence ID" value="NM_180719.4"/>
</dbReference>
<dbReference type="RefSeq" id="NP_851051.1">
    <molecule id="Q9ZT42-2"/>
    <property type="nucleotide sequence ID" value="NM_180720.1"/>
</dbReference>
<dbReference type="BioGRID" id="17535">
    <property type="interactions" value="1"/>
</dbReference>
<dbReference type="FunCoup" id="Q9ZT42">
    <property type="interactions" value="1365"/>
</dbReference>
<dbReference type="STRING" id="3702.Q9ZT42"/>
<dbReference type="iPTMnet" id="Q9ZT42"/>
<dbReference type="PaxDb" id="3702-AT5G22000.1"/>
<dbReference type="ProteomicsDB" id="237002">
    <molecule id="Q9ZT42-1"/>
</dbReference>
<dbReference type="EnsemblPlants" id="AT5G22000.1">
    <molecule id="Q9ZT42-1"/>
    <property type="protein sequence ID" value="AT5G22000.1"/>
    <property type="gene ID" value="AT5G22000"/>
</dbReference>
<dbReference type="EnsemblPlants" id="AT5G22000.2">
    <molecule id="Q9ZT42-2"/>
    <property type="protein sequence ID" value="AT5G22000.2"/>
    <property type="gene ID" value="AT5G22000"/>
</dbReference>
<dbReference type="EnsemblPlants" id="AT5G22000.3">
    <molecule id="Q9ZT42-1"/>
    <property type="protein sequence ID" value="AT5G22000.3"/>
    <property type="gene ID" value="AT5G22000"/>
</dbReference>
<dbReference type="GeneID" id="832260"/>
<dbReference type="Gramene" id="AT5G22000.1">
    <molecule id="Q9ZT42-1"/>
    <property type="protein sequence ID" value="AT5G22000.1"/>
    <property type="gene ID" value="AT5G22000"/>
</dbReference>
<dbReference type="Gramene" id="AT5G22000.2">
    <molecule id="Q9ZT42-2"/>
    <property type="protein sequence ID" value="AT5G22000.2"/>
    <property type="gene ID" value="AT5G22000"/>
</dbReference>
<dbReference type="Gramene" id="AT5G22000.3">
    <molecule id="Q9ZT42-1"/>
    <property type="protein sequence ID" value="AT5G22000.3"/>
    <property type="gene ID" value="AT5G22000"/>
</dbReference>
<dbReference type="KEGG" id="ath:AT5G22000"/>
<dbReference type="Araport" id="AT5G22000"/>
<dbReference type="TAIR" id="AT5G22000">
    <property type="gene designation" value="RHF2A"/>
</dbReference>
<dbReference type="eggNOG" id="KOG0800">
    <property type="taxonomic scope" value="Eukaryota"/>
</dbReference>
<dbReference type="HOGENOM" id="CLU_053463_0_0_1"/>
<dbReference type="InParanoid" id="Q9ZT42"/>
<dbReference type="OMA" id="RWNAVSM"/>
<dbReference type="OrthoDB" id="1681166at2759"/>
<dbReference type="PhylomeDB" id="Q9ZT42"/>
<dbReference type="UniPathway" id="UPA00143"/>
<dbReference type="PRO" id="PR:Q9ZT42"/>
<dbReference type="Proteomes" id="UP000006548">
    <property type="component" value="Chromosome 5"/>
</dbReference>
<dbReference type="ExpressionAtlas" id="Q9ZT42">
    <property type="expression patterns" value="baseline and differential"/>
</dbReference>
<dbReference type="GO" id="GO:0016740">
    <property type="term" value="F:transferase activity"/>
    <property type="evidence" value="ECO:0007669"/>
    <property type="project" value="UniProtKB-KW"/>
</dbReference>
<dbReference type="GO" id="GO:0008270">
    <property type="term" value="F:zinc ion binding"/>
    <property type="evidence" value="ECO:0007669"/>
    <property type="project" value="UniProtKB-KW"/>
</dbReference>
<dbReference type="GO" id="GO:0009561">
    <property type="term" value="P:megagametogenesis"/>
    <property type="evidence" value="ECO:0000316"/>
    <property type="project" value="TAIR"/>
</dbReference>
<dbReference type="GO" id="GO:0055046">
    <property type="term" value="P:microgametogenesis"/>
    <property type="evidence" value="ECO:0000316"/>
    <property type="project" value="TAIR"/>
</dbReference>
<dbReference type="GO" id="GO:0016567">
    <property type="term" value="P:protein ubiquitination"/>
    <property type="evidence" value="ECO:0007669"/>
    <property type="project" value="UniProtKB-UniPathway"/>
</dbReference>
<dbReference type="GO" id="GO:0051603">
    <property type="term" value="P:proteolysis involved in protein catabolic process"/>
    <property type="evidence" value="ECO:0000316"/>
    <property type="project" value="TAIR"/>
</dbReference>
<dbReference type="GO" id="GO:0051726">
    <property type="term" value="P:regulation of cell cycle"/>
    <property type="evidence" value="ECO:0000316"/>
    <property type="project" value="TAIR"/>
</dbReference>
<dbReference type="CDD" id="cd23122">
    <property type="entry name" value="RING-H2_RHF2A"/>
    <property type="match status" value="1"/>
</dbReference>
<dbReference type="FunFam" id="3.30.40.10:FF:000746">
    <property type="entry name" value="E3 ubiquitin-protein ligase RHF2A"/>
    <property type="match status" value="1"/>
</dbReference>
<dbReference type="Gene3D" id="3.30.40.10">
    <property type="entry name" value="Zinc/RING finger domain, C3HC4 (zinc finger)"/>
    <property type="match status" value="1"/>
</dbReference>
<dbReference type="InterPro" id="IPR001841">
    <property type="entry name" value="Znf_RING"/>
</dbReference>
<dbReference type="InterPro" id="IPR013083">
    <property type="entry name" value="Znf_RING/FYVE/PHD"/>
</dbReference>
<dbReference type="PANTHER" id="PTHR46463:SF88">
    <property type="entry name" value="E3 UBIQUITIN-PROTEIN LIGASE RHF2A"/>
    <property type="match status" value="1"/>
</dbReference>
<dbReference type="PANTHER" id="PTHR46463">
    <property type="entry name" value="ZINC FINGER, RING/FYVE/PHD-TYPE"/>
    <property type="match status" value="1"/>
</dbReference>
<dbReference type="Pfam" id="PF13639">
    <property type="entry name" value="zf-RING_2"/>
    <property type="match status" value="1"/>
</dbReference>
<dbReference type="SMART" id="SM00184">
    <property type="entry name" value="RING"/>
    <property type="match status" value="1"/>
</dbReference>
<dbReference type="SUPFAM" id="SSF57850">
    <property type="entry name" value="RING/U-box"/>
    <property type="match status" value="1"/>
</dbReference>
<dbReference type="PROSITE" id="PS50089">
    <property type="entry name" value="ZF_RING_2"/>
    <property type="match status" value="1"/>
</dbReference>